<gene>
    <name evidence="1" type="primary">ung</name>
    <name type="ordered locus">YPA_2437</name>
</gene>
<comment type="function">
    <text evidence="1">Excises uracil residues from the DNA which can arise as a result of misincorporation of dUMP residues by DNA polymerase or due to deamination of cytosine.</text>
</comment>
<comment type="catalytic activity">
    <reaction evidence="1">
        <text>Hydrolyzes single-stranded DNA or mismatched double-stranded DNA and polynucleotides, releasing free uracil.</text>
        <dbReference type="EC" id="3.2.2.27"/>
    </reaction>
</comment>
<comment type="subcellular location">
    <subcellularLocation>
        <location evidence="1">Cytoplasm</location>
    </subcellularLocation>
</comment>
<comment type="similarity">
    <text evidence="1">Belongs to the uracil-DNA glycosylase (UDG) superfamily. UNG family.</text>
</comment>
<keyword id="KW-0963">Cytoplasm</keyword>
<keyword id="KW-0227">DNA damage</keyword>
<keyword id="KW-0234">DNA repair</keyword>
<keyword id="KW-0378">Hydrolase</keyword>
<organism>
    <name type="scientific">Yersinia pestis bv. Antiqua (strain Antiqua)</name>
    <dbReference type="NCBI Taxonomy" id="360102"/>
    <lineage>
        <taxon>Bacteria</taxon>
        <taxon>Pseudomonadati</taxon>
        <taxon>Pseudomonadota</taxon>
        <taxon>Gammaproteobacteria</taxon>
        <taxon>Enterobacterales</taxon>
        <taxon>Yersiniaceae</taxon>
        <taxon>Yersinia</taxon>
    </lineage>
</organism>
<proteinExistence type="inferred from homology"/>
<dbReference type="EC" id="3.2.2.27" evidence="1"/>
<dbReference type="EMBL" id="CP000308">
    <property type="protein sequence ID" value="ABG14402.1"/>
    <property type="molecule type" value="Genomic_DNA"/>
</dbReference>
<dbReference type="RefSeq" id="WP_002209663.1">
    <property type="nucleotide sequence ID" value="NZ_CP009906.1"/>
</dbReference>
<dbReference type="SMR" id="Q1C570"/>
<dbReference type="GeneID" id="57975987"/>
<dbReference type="KEGG" id="ypa:YPA_2437"/>
<dbReference type="Proteomes" id="UP000001971">
    <property type="component" value="Chromosome"/>
</dbReference>
<dbReference type="GO" id="GO:0005737">
    <property type="term" value="C:cytoplasm"/>
    <property type="evidence" value="ECO:0007669"/>
    <property type="project" value="UniProtKB-SubCell"/>
</dbReference>
<dbReference type="GO" id="GO:0004844">
    <property type="term" value="F:uracil DNA N-glycosylase activity"/>
    <property type="evidence" value="ECO:0007669"/>
    <property type="project" value="UniProtKB-UniRule"/>
</dbReference>
<dbReference type="GO" id="GO:0097510">
    <property type="term" value="P:base-excision repair, AP site formation via deaminated base removal"/>
    <property type="evidence" value="ECO:0007669"/>
    <property type="project" value="TreeGrafter"/>
</dbReference>
<dbReference type="CDD" id="cd10027">
    <property type="entry name" value="UDG-F1-like"/>
    <property type="match status" value="1"/>
</dbReference>
<dbReference type="FunFam" id="3.40.470.10:FF:000001">
    <property type="entry name" value="Uracil-DNA glycosylase"/>
    <property type="match status" value="1"/>
</dbReference>
<dbReference type="Gene3D" id="3.40.470.10">
    <property type="entry name" value="Uracil-DNA glycosylase-like domain"/>
    <property type="match status" value="1"/>
</dbReference>
<dbReference type="HAMAP" id="MF_00148">
    <property type="entry name" value="UDG"/>
    <property type="match status" value="1"/>
</dbReference>
<dbReference type="InterPro" id="IPR002043">
    <property type="entry name" value="UDG_fam1"/>
</dbReference>
<dbReference type="InterPro" id="IPR018085">
    <property type="entry name" value="Ura-DNA_Glyclase_AS"/>
</dbReference>
<dbReference type="InterPro" id="IPR005122">
    <property type="entry name" value="Uracil-DNA_glycosylase-like"/>
</dbReference>
<dbReference type="InterPro" id="IPR036895">
    <property type="entry name" value="Uracil-DNA_glycosylase-like_sf"/>
</dbReference>
<dbReference type="NCBIfam" id="NF003588">
    <property type="entry name" value="PRK05254.1-1"/>
    <property type="match status" value="1"/>
</dbReference>
<dbReference type="NCBIfam" id="NF003589">
    <property type="entry name" value="PRK05254.1-2"/>
    <property type="match status" value="1"/>
</dbReference>
<dbReference type="NCBIfam" id="NF003591">
    <property type="entry name" value="PRK05254.1-4"/>
    <property type="match status" value="1"/>
</dbReference>
<dbReference type="NCBIfam" id="NF003592">
    <property type="entry name" value="PRK05254.1-5"/>
    <property type="match status" value="1"/>
</dbReference>
<dbReference type="NCBIfam" id="TIGR00628">
    <property type="entry name" value="ung"/>
    <property type="match status" value="1"/>
</dbReference>
<dbReference type="PANTHER" id="PTHR11264">
    <property type="entry name" value="URACIL-DNA GLYCOSYLASE"/>
    <property type="match status" value="1"/>
</dbReference>
<dbReference type="PANTHER" id="PTHR11264:SF0">
    <property type="entry name" value="URACIL-DNA GLYCOSYLASE"/>
    <property type="match status" value="1"/>
</dbReference>
<dbReference type="Pfam" id="PF03167">
    <property type="entry name" value="UDG"/>
    <property type="match status" value="1"/>
</dbReference>
<dbReference type="SMART" id="SM00986">
    <property type="entry name" value="UDG"/>
    <property type="match status" value="1"/>
</dbReference>
<dbReference type="SMART" id="SM00987">
    <property type="entry name" value="UreE_C"/>
    <property type="match status" value="1"/>
</dbReference>
<dbReference type="SUPFAM" id="SSF52141">
    <property type="entry name" value="Uracil-DNA glycosylase-like"/>
    <property type="match status" value="1"/>
</dbReference>
<dbReference type="PROSITE" id="PS00130">
    <property type="entry name" value="U_DNA_GLYCOSYLASE"/>
    <property type="match status" value="1"/>
</dbReference>
<evidence type="ECO:0000255" key="1">
    <source>
        <dbReference type="HAMAP-Rule" id="MF_00148"/>
    </source>
</evidence>
<reference key="1">
    <citation type="journal article" date="2006" name="J. Bacteriol.">
        <title>Complete genome sequence of Yersinia pestis strains Antiqua and Nepal516: evidence of gene reduction in an emerging pathogen.</title>
        <authorList>
            <person name="Chain P.S.G."/>
            <person name="Hu P."/>
            <person name="Malfatti S.A."/>
            <person name="Radnedge L."/>
            <person name="Larimer F."/>
            <person name="Vergez L.M."/>
            <person name="Worsham P."/>
            <person name="Chu M.C."/>
            <person name="Andersen G.L."/>
        </authorList>
    </citation>
    <scope>NUCLEOTIDE SEQUENCE [LARGE SCALE GENOMIC DNA]</scope>
    <source>
        <strain>Antiqua</strain>
    </source>
</reference>
<protein>
    <recommendedName>
        <fullName evidence="1">Uracil-DNA glycosylase</fullName>
        <shortName evidence="1">UDG</shortName>
        <ecNumber evidence="1">3.2.2.27</ecNumber>
    </recommendedName>
</protein>
<sequence>MSPSLTWHDVIGQEKEQPYFKDTLAYVAAERRAGKTIYPPQKDIFNAFRLTELDQVKVVILGQDPYHGPNQAHGLSFSVLPGVPAPPSLGNIYKELVTDIPGFQRPNHGFLQSWAEQGVLLLNTVLTVEAGKAHSHANLGWETFTDKVIAALNEHREGVIFMLWGSHAQKKGRIINTERHYILKAPHPSPLSAHRGFLGCKHFSQANQLLQQQNQQPIDWQPKLPAVE</sequence>
<feature type="chain" id="PRO_1000009967" description="Uracil-DNA glycosylase">
    <location>
        <begin position="1"/>
        <end position="228"/>
    </location>
</feature>
<feature type="active site" description="Proton acceptor" evidence="1">
    <location>
        <position position="64"/>
    </location>
</feature>
<name>UNG_YERPA</name>
<accession>Q1C570</accession>